<feature type="chain" id="PRO_0000066376" description="Uncharacterized 23.9 kDa protein in xynA 3'region">
    <location>
        <begin position="1"/>
        <end position="203"/>
    </location>
</feature>
<accession>P40982</accession>
<name>YOR5_CALSR</name>
<organism>
    <name type="scientific">Caldicellulosiruptor sp. (strain Rt8B.4)</name>
    <dbReference type="NCBI Taxonomy" id="28238"/>
    <lineage>
        <taxon>Bacteria</taxon>
        <taxon>Bacillati</taxon>
        <taxon>Bacillota</taxon>
        <taxon>Bacillota incertae sedis</taxon>
        <taxon>Caldicellulosiruptorales</taxon>
        <taxon>Caldicellulosiruptoraceae</taxon>
        <taxon>Caldicellulosiruptor</taxon>
    </lineage>
</organism>
<proteinExistence type="predicted"/>
<dbReference type="EMBL" id="L18965">
    <property type="protein sequence ID" value="AAB42045.1"/>
    <property type="molecule type" value="Genomic_DNA"/>
</dbReference>
<dbReference type="PIR" id="S41789">
    <property type="entry name" value="S41789"/>
</dbReference>
<dbReference type="InterPro" id="IPR045706">
    <property type="entry name" value="DUF6062"/>
</dbReference>
<dbReference type="Pfam" id="PF19538">
    <property type="entry name" value="DUF6062"/>
    <property type="match status" value="1"/>
</dbReference>
<reference key="1">
    <citation type="journal article" date="1996" name="Appl. Microbiol. Biotechnol.">
        <title>Cloning, sequencing and overexpression in Escherichia coli of a xylanase gene, xynA from the thermophilic bacterium Rt8B.4 genus Caldicellulosiruptor.</title>
        <authorList>
            <person name="Dwivedi P.P."/>
            <person name="Gibbs M.D."/>
            <person name="Saul D.J."/>
            <person name="Bergquist P.L."/>
        </authorList>
    </citation>
    <scope>NUCLEOTIDE SEQUENCE [GENOMIC DNA]</scope>
</reference>
<protein>
    <recommendedName>
        <fullName>Uncharacterized 23.9 kDa protein in xynA 3'region</fullName>
    </recommendedName>
    <alternativeName>
        <fullName>ORF5</fullName>
    </alternativeName>
</protein>
<sequence>MIENFKEDRCIVCHLKNRAMDKFFDDFLYESVNDYSLRDRIRKGGICPGHARKLESFGDVLAHAIIYSDLLRSFKHNHHIEILPRKKKTQGQNICVFCEKEQGFEDIYTRAFSYFFFTSPQFKSAFAERGFICQRHLNQVLEKTASVSAKRELLSVLESKIDKILNHLERIKEKNDYRNIHINYTADEIRAWHMAVEFVAGTQ</sequence>